<gene>
    <name evidence="4" type="primary">CNTD1</name>
    <name type="synonym">CNTD</name>
</gene>
<evidence type="ECO:0000250" key="1">
    <source>
        <dbReference type="UniProtKB" id="Q9D995"/>
    </source>
</evidence>
<evidence type="ECO:0000303" key="2">
    <source>
    </source>
</evidence>
<evidence type="ECO:0000305" key="3"/>
<evidence type="ECO:0000312" key="4">
    <source>
        <dbReference type="HGNC" id="HGNC:26847"/>
    </source>
</evidence>
<sequence length="330" mass="36921">MDGPMRPRSASLVDFQFGVVATETIEDALLHLAQQNEQAVREASGRLGRFREPQIVEFVFLLSEQWCLEKSVSYQAVEILERFMVKQAENICRQATIQPRDNKRESQNWRALKQQLVNKFTLRLVSCVQLASKLSFRNKIISNITVLNFLQALGYLHTKEELLESELDVLKSLNFRINLPTPLAYVETLLEVLGYNGCLVPAMRLHATCLTLLDLVYLLHEPIYESLLRASIENSTPSQLQGEKFTSVKEDFMLLAVGIIAASAFIQNHECWSQVVGHLQSITGIALASIAEFSYAILTHGVGANTPGRQQSIPPHLAARALKTVASSNT</sequence>
<feature type="chain" id="PRO_0000313715" description="Cyclin N-terminal domain-containing protein 1">
    <location>
        <begin position="1"/>
        <end position="330"/>
    </location>
</feature>
<feature type="domain" description="Cyclin N-terminal">
    <location>
        <begin position="27"/>
        <end position="178"/>
    </location>
</feature>
<feature type="splice variant" id="VSP_030111" description="In isoform 2." evidence="2">
    <location>
        <begin position="1"/>
        <end position="202"/>
    </location>
</feature>
<feature type="sequence variant" id="VAR_037708" description="In dbSNP:rs12947820.">
    <original>T</original>
    <variation>P</variation>
    <location>
        <position position="145"/>
    </location>
</feature>
<feature type="sequence conflict" description="In Ref. 1; BAC05060." evidence="3" ref="1">
    <original>P</original>
    <variation>S</variation>
    <location>
        <position position="4"/>
    </location>
</feature>
<comment type="function">
    <text evidence="1">Plays a role in the different steps of crossover formation during meiotic recombination. Participates in the crossover differentiation step of crossover-specific recombination intermediates through its interaction with PRR19. In addition, stimulates crossover formation through the interactions with RFC3 and RFC4 and simultaneously regulates cell-cycle progression through interactions with CDC34 and subsequent ubiquitination of WEE1. May also participates in an active deselection process that destabilizes or removes excess pre-CO intermediates.</text>
</comment>
<comment type="subunit">
    <text evidence="1">Interacts with PRR19; this interaction promotes crossover formation. Interacts with RFC3 and RFC4; these interactions facilitate crossover formation. Interacts with CDC34; this interaction regulates the cell-cycle progression.</text>
</comment>
<comment type="subcellular location">
    <subcellularLocation>
        <location evidence="1">Nucleus</location>
    </subcellularLocation>
    <subcellularLocation>
        <location evidence="1">Cytoplasm</location>
    </subcellularLocation>
    <subcellularLocation>
        <location evidence="1">Chromosome</location>
    </subcellularLocation>
    <text evidence="1">Shuttles between the nucleus and cytoplasm in a stage-specific manner of prophase I cells. Co-localized at crossover sites with PRR19.</text>
</comment>
<comment type="alternative products">
    <event type="alternative splicing"/>
    <isoform>
        <id>Q8N815-1</id>
        <name>1</name>
        <sequence type="displayed"/>
    </isoform>
    <isoform>
        <id>Q8N815-2</id>
        <name>2</name>
        <sequence type="described" ref="VSP_030111"/>
    </isoform>
</comment>
<name>CNTD1_HUMAN</name>
<protein>
    <recommendedName>
        <fullName evidence="3">Cyclin N-terminal domain-containing protein 1</fullName>
    </recommendedName>
</protein>
<keyword id="KW-0025">Alternative splicing</keyword>
<keyword id="KW-0158">Chromosome</keyword>
<keyword id="KW-0963">Cytoplasm</keyword>
<keyword id="KW-0469">Meiosis</keyword>
<keyword id="KW-0539">Nucleus</keyword>
<keyword id="KW-1185">Reference proteome</keyword>
<proteinExistence type="evidence at transcript level"/>
<dbReference type="EMBL" id="AK097456">
    <property type="protein sequence ID" value="BAC05060.1"/>
    <property type="molecule type" value="mRNA"/>
</dbReference>
<dbReference type="EMBL" id="AL833052">
    <property type="protein sequence ID" value="CAH56287.1"/>
    <property type="molecule type" value="mRNA"/>
</dbReference>
<dbReference type="EMBL" id="CH471152">
    <property type="protein sequence ID" value="EAW60886.1"/>
    <property type="molecule type" value="Genomic_DNA"/>
</dbReference>
<dbReference type="EMBL" id="BC026187">
    <property type="protein sequence ID" value="AAH26187.1"/>
    <property type="molecule type" value="mRNA"/>
</dbReference>
<dbReference type="CCDS" id="CCDS11440.1">
    <molecule id="Q8N815-1"/>
</dbReference>
<dbReference type="RefSeq" id="NP_001317151.1">
    <property type="nucleotide sequence ID" value="NM_001330222.1"/>
</dbReference>
<dbReference type="RefSeq" id="NP_775749.2">
    <molecule id="Q8N815-1"/>
    <property type="nucleotide sequence ID" value="NM_173478.3"/>
</dbReference>
<dbReference type="BioGRID" id="125891">
    <property type="interactions" value="3"/>
</dbReference>
<dbReference type="FunCoup" id="Q8N815">
    <property type="interactions" value="118"/>
</dbReference>
<dbReference type="STRING" id="9606.ENSP00000465204"/>
<dbReference type="GlyGen" id="Q8N815">
    <property type="glycosylation" value="1 site, 1 O-linked glycan (1 site)"/>
</dbReference>
<dbReference type="iPTMnet" id="Q8N815"/>
<dbReference type="PhosphoSitePlus" id="Q8N815"/>
<dbReference type="BioMuta" id="CNTD1"/>
<dbReference type="DMDM" id="166216083"/>
<dbReference type="MassIVE" id="Q8N815"/>
<dbReference type="PaxDb" id="9606-ENSP00000465204"/>
<dbReference type="PeptideAtlas" id="Q8N815"/>
<dbReference type="ProteomicsDB" id="72360">
    <molecule id="Q8N815-1"/>
</dbReference>
<dbReference type="Antibodypedia" id="17117">
    <property type="antibodies" value="94 antibodies from 22 providers"/>
</dbReference>
<dbReference type="DNASU" id="124817"/>
<dbReference type="Ensembl" id="ENST00000588408.6">
    <molecule id="Q8N815-1"/>
    <property type="protein sequence ID" value="ENSP00000465204.1"/>
    <property type="gene ID" value="ENSG00000176563.10"/>
</dbReference>
<dbReference type="GeneID" id="124817"/>
<dbReference type="KEGG" id="hsa:124817"/>
<dbReference type="MANE-Select" id="ENST00000588408.6">
    <property type="protein sequence ID" value="ENSP00000465204.1"/>
    <property type="RefSeq nucleotide sequence ID" value="NM_173478.3"/>
    <property type="RefSeq protein sequence ID" value="NP_775749.2"/>
</dbReference>
<dbReference type="UCSC" id="uc002ibm.5">
    <molecule id="Q8N815-1"/>
    <property type="organism name" value="human"/>
</dbReference>
<dbReference type="AGR" id="HGNC:26847"/>
<dbReference type="CTD" id="124817"/>
<dbReference type="DisGeNET" id="124817"/>
<dbReference type="GeneCards" id="CNTD1"/>
<dbReference type="HGNC" id="HGNC:26847">
    <property type="gene designation" value="CNTD1"/>
</dbReference>
<dbReference type="HPA" id="ENSG00000176563">
    <property type="expression patterns" value="Tissue enriched (testis)"/>
</dbReference>
<dbReference type="MIM" id="618166">
    <property type="type" value="gene"/>
</dbReference>
<dbReference type="neXtProt" id="NX_Q8N815"/>
<dbReference type="OpenTargets" id="ENSG00000176563"/>
<dbReference type="PharmGKB" id="PA142672089"/>
<dbReference type="VEuPathDB" id="HostDB:ENSG00000176563"/>
<dbReference type="eggNOG" id="ENOG502QVK8">
    <property type="taxonomic scope" value="Eukaryota"/>
</dbReference>
<dbReference type="GeneTree" id="ENSGT00440000033966"/>
<dbReference type="InParanoid" id="Q8N815"/>
<dbReference type="OMA" id="CFKETRI"/>
<dbReference type="OrthoDB" id="9983043at2759"/>
<dbReference type="PAN-GO" id="Q8N815">
    <property type="GO annotations" value="2 GO annotations based on evolutionary models"/>
</dbReference>
<dbReference type="PhylomeDB" id="Q8N815"/>
<dbReference type="PathwayCommons" id="Q8N815"/>
<dbReference type="SignaLink" id="Q8N815"/>
<dbReference type="BioGRID-ORCS" id="124817">
    <property type="hits" value="15 hits in 1146 CRISPR screens"/>
</dbReference>
<dbReference type="ChiTaRS" id="CNTD1">
    <property type="organism name" value="human"/>
</dbReference>
<dbReference type="GenomeRNAi" id="124817"/>
<dbReference type="Pharos" id="Q8N815">
    <property type="development level" value="Tbio"/>
</dbReference>
<dbReference type="PRO" id="PR:Q8N815"/>
<dbReference type="Proteomes" id="UP000005640">
    <property type="component" value="Chromosome 17"/>
</dbReference>
<dbReference type="RNAct" id="Q8N815">
    <property type="molecule type" value="protein"/>
</dbReference>
<dbReference type="Bgee" id="ENSG00000176563">
    <property type="expression patterns" value="Expressed in left testis and 97 other cell types or tissues"/>
</dbReference>
<dbReference type="ExpressionAtlas" id="Q8N815">
    <property type="expression patterns" value="baseline and differential"/>
</dbReference>
<dbReference type="GO" id="GO:0005694">
    <property type="term" value="C:chromosome"/>
    <property type="evidence" value="ECO:0000250"/>
    <property type="project" value="UniProtKB"/>
</dbReference>
<dbReference type="GO" id="GO:0005737">
    <property type="term" value="C:cytoplasm"/>
    <property type="evidence" value="ECO:0007669"/>
    <property type="project" value="UniProtKB-SubCell"/>
</dbReference>
<dbReference type="GO" id="GO:0005634">
    <property type="term" value="C:nucleus"/>
    <property type="evidence" value="ECO:0007669"/>
    <property type="project" value="UniProtKB-SubCell"/>
</dbReference>
<dbReference type="GO" id="GO:0035861">
    <property type="term" value="C:site of double-strand break"/>
    <property type="evidence" value="ECO:0000318"/>
    <property type="project" value="GO_Central"/>
</dbReference>
<dbReference type="GO" id="GO:0007131">
    <property type="term" value="P:reciprocal meiotic recombination"/>
    <property type="evidence" value="ECO:0000318"/>
    <property type="project" value="GO_Central"/>
</dbReference>
<dbReference type="GO" id="GO:0051445">
    <property type="term" value="P:regulation of meiotic cell cycle"/>
    <property type="evidence" value="ECO:0000250"/>
    <property type="project" value="UniProtKB"/>
</dbReference>
<dbReference type="GO" id="GO:0007283">
    <property type="term" value="P:spermatogenesis"/>
    <property type="evidence" value="ECO:0007669"/>
    <property type="project" value="Ensembl"/>
</dbReference>
<dbReference type="CDD" id="cd20541">
    <property type="entry name" value="CYCLIN_CNTD1"/>
    <property type="match status" value="1"/>
</dbReference>
<dbReference type="Gene3D" id="1.10.472.10">
    <property type="entry name" value="Cyclin-like"/>
    <property type="match status" value="1"/>
</dbReference>
<dbReference type="InterPro" id="IPR036915">
    <property type="entry name" value="Cyclin-like_sf"/>
</dbReference>
<dbReference type="InterPro" id="IPR006671">
    <property type="entry name" value="Cyclin_N"/>
</dbReference>
<dbReference type="PANTHER" id="PTHR21615">
    <property type="entry name" value="CYCLIN N-TERMINAL DOMAIN-CONTAINING PROTEIN 1"/>
    <property type="match status" value="1"/>
</dbReference>
<dbReference type="PANTHER" id="PTHR21615:SF2">
    <property type="entry name" value="CYCLIN N-TERMINAL DOMAIN-CONTAINING PROTEIN 1"/>
    <property type="match status" value="1"/>
</dbReference>
<dbReference type="Pfam" id="PF00134">
    <property type="entry name" value="Cyclin_N"/>
    <property type="match status" value="1"/>
</dbReference>
<dbReference type="SUPFAM" id="SSF47954">
    <property type="entry name" value="Cyclin-like"/>
    <property type="match status" value="1"/>
</dbReference>
<reference key="1">
    <citation type="journal article" date="2004" name="Nat. Genet.">
        <title>Complete sequencing and characterization of 21,243 full-length human cDNAs.</title>
        <authorList>
            <person name="Ota T."/>
            <person name="Suzuki Y."/>
            <person name="Nishikawa T."/>
            <person name="Otsuki T."/>
            <person name="Sugiyama T."/>
            <person name="Irie R."/>
            <person name="Wakamatsu A."/>
            <person name="Hayashi K."/>
            <person name="Sato H."/>
            <person name="Nagai K."/>
            <person name="Kimura K."/>
            <person name="Makita H."/>
            <person name="Sekine M."/>
            <person name="Obayashi M."/>
            <person name="Nishi T."/>
            <person name="Shibahara T."/>
            <person name="Tanaka T."/>
            <person name="Ishii S."/>
            <person name="Yamamoto J."/>
            <person name="Saito K."/>
            <person name="Kawai Y."/>
            <person name="Isono Y."/>
            <person name="Nakamura Y."/>
            <person name="Nagahari K."/>
            <person name="Murakami K."/>
            <person name="Yasuda T."/>
            <person name="Iwayanagi T."/>
            <person name="Wagatsuma M."/>
            <person name="Shiratori A."/>
            <person name="Sudo H."/>
            <person name="Hosoiri T."/>
            <person name="Kaku Y."/>
            <person name="Kodaira H."/>
            <person name="Kondo H."/>
            <person name="Sugawara M."/>
            <person name="Takahashi M."/>
            <person name="Kanda K."/>
            <person name="Yokoi T."/>
            <person name="Furuya T."/>
            <person name="Kikkawa E."/>
            <person name="Omura Y."/>
            <person name="Abe K."/>
            <person name="Kamihara K."/>
            <person name="Katsuta N."/>
            <person name="Sato K."/>
            <person name="Tanikawa M."/>
            <person name="Yamazaki M."/>
            <person name="Ninomiya K."/>
            <person name="Ishibashi T."/>
            <person name="Yamashita H."/>
            <person name="Murakawa K."/>
            <person name="Fujimori K."/>
            <person name="Tanai H."/>
            <person name="Kimata M."/>
            <person name="Watanabe M."/>
            <person name="Hiraoka S."/>
            <person name="Chiba Y."/>
            <person name="Ishida S."/>
            <person name="Ono Y."/>
            <person name="Takiguchi S."/>
            <person name="Watanabe S."/>
            <person name="Yosida M."/>
            <person name="Hotuta T."/>
            <person name="Kusano J."/>
            <person name="Kanehori K."/>
            <person name="Takahashi-Fujii A."/>
            <person name="Hara H."/>
            <person name="Tanase T.-O."/>
            <person name="Nomura Y."/>
            <person name="Togiya S."/>
            <person name="Komai F."/>
            <person name="Hara R."/>
            <person name="Takeuchi K."/>
            <person name="Arita M."/>
            <person name="Imose N."/>
            <person name="Musashino K."/>
            <person name="Yuuki H."/>
            <person name="Oshima A."/>
            <person name="Sasaki N."/>
            <person name="Aotsuka S."/>
            <person name="Yoshikawa Y."/>
            <person name="Matsunawa H."/>
            <person name="Ichihara T."/>
            <person name="Shiohata N."/>
            <person name="Sano S."/>
            <person name="Moriya S."/>
            <person name="Momiyama H."/>
            <person name="Satoh N."/>
            <person name="Takami S."/>
            <person name="Terashima Y."/>
            <person name="Suzuki O."/>
            <person name="Nakagawa S."/>
            <person name="Senoh A."/>
            <person name="Mizoguchi H."/>
            <person name="Goto Y."/>
            <person name="Shimizu F."/>
            <person name="Wakebe H."/>
            <person name="Hishigaki H."/>
            <person name="Watanabe T."/>
            <person name="Sugiyama A."/>
            <person name="Takemoto M."/>
            <person name="Kawakami B."/>
            <person name="Yamazaki M."/>
            <person name="Watanabe K."/>
            <person name="Kumagai A."/>
            <person name="Itakura S."/>
            <person name="Fukuzumi Y."/>
            <person name="Fujimori Y."/>
            <person name="Komiyama M."/>
            <person name="Tashiro H."/>
            <person name="Tanigami A."/>
            <person name="Fujiwara T."/>
            <person name="Ono T."/>
            <person name="Yamada K."/>
            <person name="Fujii Y."/>
            <person name="Ozaki K."/>
            <person name="Hirao M."/>
            <person name="Ohmori Y."/>
            <person name="Kawabata A."/>
            <person name="Hikiji T."/>
            <person name="Kobatake N."/>
            <person name="Inagaki H."/>
            <person name="Ikema Y."/>
            <person name="Okamoto S."/>
            <person name="Okitani R."/>
            <person name="Kawakami T."/>
            <person name="Noguchi S."/>
            <person name="Itoh T."/>
            <person name="Shigeta K."/>
            <person name="Senba T."/>
            <person name="Matsumura K."/>
            <person name="Nakajima Y."/>
            <person name="Mizuno T."/>
            <person name="Morinaga M."/>
            <person name="Sasaki M."/>
            <person name="Togashi T."/>
            <person name="Oyama M."/>
            <person name="Hata H."/>
            <person name="Watanabe M."/>
            <person name="Komatsu T."/>
            <person name="Mizushima-Sugano J."/>
            <person name="Satoh T."/>
            <person name="Shirai Y."/>
            <person name="Takahashi Y."/>
            <person name="Nakagawa K."/>
            <person name="Okumura K."/>
            <person name="Nagase T."/>
            <person name="Nomura N."/>
            <person name="Kikuchi H."/>
            <person name="Masuho Y."/>
            <person name="Yamashita R."/>
            <person name="Nakai K."/>
            <person name="Yada T."/>
            <person name="Nakamura Y."/>
            <person name="Ohara O."/>
            <person name="Isogai T."/>
            <person name="Sugano S."/>
        </authorList>
    </citation>
    <scope>NUCLEOTIDE SEQUENCE [LARGE SCALE MRNA] (ISOFORM 1)</scope>
    <source>
        <tissue>Testis</tissue>
    </source>
</reference>
<reference key="2">
    <citation type="journal article" date="2007" name="BMC Genomics">
        <title>The full-ORF clone resource of the German cDNA consortium.</title>
        <authorList>
            <person name="Bechtel S."/>
            <person name="Rosenfelder H."/>
            <person name="Duda A."/>
            <person name="Schmidt C.P."/>
            <person name="Ernst U."/>
            <person name="Wellenreuther R."/>
            <person name="Mehrle A."/>
            <person name="Schuster C."/>
            <person name="Bahr A."/>
            <person name="Bloecker H."/>
            <person name="Heubner D."/>
            <person name="Hoerlein A."/>
            <person name="Michel G."/>
            <person name="Wedler H."/>
            <person name="Koehrer K."/>
            <person name="Ottenwaelder B."/>
            <person name="Poustka A."/>
            <person name="Wiemann S."/>
            <person name="Schupp I."/>
        </authorList>
    </citation>
    <scope>NUCLEOTIDE SEQUENCE [LARGE SCALE MRNA] (ISOFORM 2)</scope>
    <source>
        <tissue>Stomach</tissue>
    </source>
</reference>
<reference key="3">
    <citation type="submission" date="2005-07" db="EMBL/GenBank/DDBJ databases">
        <authorList>
            <person name="Mural R.J."/>
            <person name="Istrail S."/>
            <person name="Sutton G.G."/>
            <person name="Florea L."/>
            <person name="Halpern A.L."/>
            <person name="Mobarry C.M."/>
            <person name="Lippert R."/>
            <person name="Walenz B."/>
            <person name="Shatkay H."/>
            <person name="Dew I."/>
            <person name="Miller J.R."/>
            <person name="Flanigan M.J."/>
            <person name="Edwards N.J."/>
            <person name="Bolanos R."/>
            <person name="Fasulo D."/>
            <person name="Halldorsson B.V."/>
            <person name="Hannenhalli S."/>
            <person name="Turner R."/>
            <person name="Yooseph S."/>
            <person name="Lu F."/>
            <person name="Nusskern D.R."/>
            <person name="Shue B.C."/>
            <person name="Zheng X.H."/>
            <person name="Zhong F."/>
            <person name="Delcher A.L."/>
            <person name="Huson D.H."/>
            <person name="Kravitz S.A."/>
            <person name="Mouchard L."/>
            <person name="Reinert K."/>
            <person name="Remington K.A."/>
            <person name="Clark A.G."/>
            <person name="Waterman M.S."/>
            <person name="Eichler E.E."/>
            <person name="Adams M.D."/>
            <person name="Hunkapiller M.W."/>
            <person name="Myers E.W."/>
            <person name="Venter J.C."/>
        </authorList>
    </citation>
    <scope>NUCLEOTIDE SEQUENCE [LARGE SCALE GENOMIC DNA]</scope>
</reference>
<reference key="4">
    <citation type="journal article" date="2004" name="Genome Res.">
        <title>The status, quality, and expansion of the NIH full-length cDNA project: the Mammalian Gene Collection (MGC).</title>
        <authorList>
            <consortium name="The MGC Project Team"/>
        </authorList>
    </citation>
    <scope>NUCLEOTIDE SEQUENCE [LARGE SCALE MRNA] (ISOFORM 1)</scope>
    <source>
        <tissue>Testis</tissue>
    </source>
</reference>
<accession>Q8N815</accession>
<accession>Q658Q6</accession>
<accession>Q8NEP1</accession>
<organism>
    <name type="scientific">Homo sapiens</name>
    <name type="common">Human</name>
    <dbReference type="NCBI Taxonomy" id="9606"/>
    <lineage>
        <taxon>Eukaryota</taxon>
        <taxon>Metazoa</taxon>
        <taxon>Chordata</taxon>
        <taxon>Craniata</taxon>
        <taxon>Vertebrata</taxon>
        <taxon>Euteleostomi</taxon>
        <taxon>Mammalia</taxon>
        <taxon>Eutheria</taxon>
        <taxon>Euarchontoglires</taxon>
        <taxon>Primates</taxon>
        <taxon>Haplorrhini</taxon>
        <taxon>Catarrhini</taxon>
        <taxon>Hominidae</taxon>
        <taxon>Homo</taxon>
    </lineage>
</organism>